<evidence type="ECO:0000255" key="1">
    <source>
        <dbReference type="HAMAP-Rule" id="MF_00186"/>
    </source>
</evidence>
<gene>
    <name evidence="1" type="primary">glpK</name>
    <name type="ordered locus">Bind_0380</name>
</gene>
<keyword id="KW-0067">ATP-binding</keyword>
<keyword id="KW-0319">Glycerol metabolism</keyword>
<keyword id="KW-0418">Kinase</keyword>
<keyword id="KW-0547">Nucleotide-binding</keyword>
<keyword id="KW-1185">Reference proteome</keyword>
<keyword id="KW-0808">Transferase</keyword>
<sequence>MTKYVAVIDQGTTSTRCMVFNKQGEIVAQHQLEHEQICPQAGWVEHDPLEIWERTKDVIHGSVAKAGLVAADIAAIGITNQRETTMIWNRKTGQPYGNAIVWQDTRTDIVCNQMSAEGGQNRFQAKTGLPLATYFSGPKIRWMLDHYPGLRQDAEKGEALFGNMDSWLIWKLTGGPGPAAVHVTDVTNASRTMLMNLKTLDWDEELLSAFAIPRAMLPSIRPSSDPEFYGFTRQDGPFGGEIPICGDLGDQQAATVGQVCFDAGEAKNTYGTGCFMLMNTGTEMVHSNHGLLTTVCYQFGHEKPHYALEGSVAIAGALVQWLRDRMRVINTAADIENLAKLVPDNGGMYFVPAFSGLFAPYWRSEARGLIIGMTRFINRGHFARASLEAAAYQTREVVDAMQADSNVSLKVLKVDGGMTANDLLMQIQADVLGVPVVRPKVAESTALGAAYAAGLAIGYWKNSDDLCQNWGVDKSWKPSGDDTLRTKNYAMWKKAVTRTFDWLDESA</sequence>
<protein>
    <recommendedName>
        <fullName evidence="1">Glycerol kinase</fullName>
        <ecNumber evidence="1">2.7.1.30</ecNumber>
    </recommendedName>
    <alternativeName>
        <fullName evidence="1">ATP:glycerol 3-phosphotransferase</fullName>
    </alternativeName>
    <alternativeName>
        <fullName evidence="1">Glycerokinase</fullName>
        <shortName evidence="1">GK</shortName>
    </alternativeName>
</protein>
<dbReference type="EC" id="2.7.1.30" evidence="1"/>
<dbReference type="EMBL" id="CP001016">
    <property type="protein sequence ID" value="ACB94033.1"/>
    <property type="molecule type" value="Genomic_DNA"/>
</dbReference>
<dbReference type="RefSeq" id="WP_012383391.1">
    <property type="nucleotide sequence ID" value="NC_010581.1"/>
</dbReference>
<dbReference type="SMR" id="B2IE09"/>
<dbReference type="STRING" id="395963.Bind_0380"/>
<dbReference type="KEGG" id="bid:Bind_0380"/>
<dbReference type="eggNOG" id="COG0554">
    <property type="taxonomic scope" value="Bacteria"/>
</dbReference>
<dbReference type="HOGENOM" id="CLU_009281_2_3_5"/>
<dbReference type="OrthoDB" id="9805576at2"/>
<dbReference type="UniPathway" id="UPA00618">
    <property type="reaction ID" value="UER00672"/>
</dbReference>
<dbReference type="Proteomes" id="UP000001695">
    <property type="component" value="Chromosome"/>
</dbReference>
<dbReference type="GO" id="GO:0005829">
    <property type="term" value="C:cytosol"/>
    <property type="evidence" value="ECO:0007669"/>
    <property type="project" value="TreeGrafter"/>
</dbReference>
<dbReference type="GO" id="GO:0005524">
    <property type="term" value="F:ATP binding"/>
    <property type="evidence" value="ECO:0007669"/>
    <property type="project" value="UniProtKB-UniRule"/>
</dbReference>
<dbReference type="GO" id="GO:0004370">
    <property type="term" value="F:glycerol kinase activity"/>
    <property type="evidence" value="ECO:0000250"/>
    <property type="project" value="UniProtKB"/>
</dbReference>
<dbReference type="GO" id="GO:0019563">
    <property type="term" value="P:glycerol catabolic process"/>
    <property type="evidence" value="ECO:0007669"/>
    <property type="project" value="UniProtKB-UniRule"/>
</dbReference>
<dbReference type="GO" id="GO:0006071">
    <property type="term" value="P:glycerol metabolic process"/>
    <property type="evidence" value="ECO:0000250"/>
    <property type="project" value="UniProtKB"/>
</dbReference>
<dbReference type="GO" id="GO:0006072">
    <property type="term" value="P:glycerol-3-phosphate metabolic process"/>
    <property type="evidence" value="ECO:0007669"/>
    <property type="project" value="InterPro"/>
</dbReference>
<dbReference type="CDD" id="cd07769">
    <property type="entry name" value="ASKHA_NBD_FGGY_GK"/>
    <property type="match status" value="1"/>
</dbReference>
<dbReference type="FunFam" id="3.30.420.40:FF:000007">
    <property type="entry name" value="Glycerol kinase"/>
    <property type="match status" value="1"/>
</dbReference>
<dbReference type="FunFam" id="3.30.420.40:FF:000008">
    <property type="entry name" value="Glycerol kinase"/>
    <property type="match status" value="1"/>
</dbReference>
<dbReference type="Gene3D" id="3.30.420.40">
    <property type="match status" value="2"/>
</dbReference>
<dbReference type="HAMAP" id="MF_00186">
    <property type="entry name" value="Glycerol_kin"/>
    <property type="match status" value="1"/>
</dbReference>
<dbReference type="InterPro" id="IPR043129">
    <property type="entry name" value="ATPase_NBD"/>
</dbReference>
<dbReference type="InterPro" id="IPR000577">
    <property type="entry name" value="Carb_kinase_FGGY"/>
</dbReference>
<dbReference type="InterPro" id="IPR018483">
    <property type="entry name" value="Carb_kinase_FGGY_CS"/>
</dbReference>
<dbReference type="InterPro" id="IPR018485">
    <property type="entry name" value="FGGY_C"/>
</dbReference>
<dbReference type="InterPro" id="IPR018484">
    <property type="entry name" value="FGGY_N"/>
</dbReference>
<dbReference type="InterPro" id="IPR005999">
    <property type="entry name" value="Glycerol_kin"/>
</dbReference>
<dbReference type="NCBIfam" id="TIGR01311">
    <property type="entry name" value="glycerol_kin"/>
    <property type="match status" value="1"/>
</dbReference>
<dbReference type="NCBIfam" id="NF000756">
    <property type="entry name" value="PRK00047.1"/>
    <property type="match status" value="1"/>
</dbReference>
<dbReference type="PANTHER" id="PTHR10196:SF69">
    <property type="entry name" value="GLYCEROL KINASE"/>
    <property type="match status" value="1"/>
</dbReference>
<dbReference type="PANTHER" id="PTHR10196">
    <property type="entry name" value="SUGAR KINASE"/>
    <property type="match status" value="1"/>
</dbReference>
<dbReference type="Pfam" id="PF02782">
    <property type="entry name" value="FGGY_C"/>
    <property type="match status" value="1"/>
</dbReference>
<dbReference type="Pfam" id="PF00370">
    <property type="entry name" value="FGGY_N"/>
    <property type="match status" value="1"/>
</dbReference>
<dbReference type="PIRSF" id="PIRSF000538">
    <property type="entry name" value="GlpK"/>
    <property type="match status" value="1"/>
</dbReference>
<dbReference type="SUPFAM" id="SSF53067">
    <property type="entry name" value="Actin-like ATPase domain"/>
    <property type="match status" value="2"/>
</dbReference>
<dbReference type="PROSITE" id="PS00933">
    <property type="entry name" value="FGGY_KINASES_1"/>
    <property type="match status" value="1"/>
</dbReference>
<dbReference type="PROSITE" id="PS00445">
    <property type="entry name" value="FGGY_KINASES_2"/>
    <property type="match status" value="1"/>
</dbReference>
<organism>
    <name type="scientific">Beijerinckia indica subsp. indica (strain ATCC 9039 / DSM 1715 / NCIMB 8712)</name>
    <dbReference type="NCBI Taxonomy" id="395963"/>
    <lineage>
        <taxon>Bacteria</taxon>
        <taxon>Pseudomonadati</taxon>
        <taxon>Pseudomonadota</taxon>
        <taxon>Alphaproteobacteria</taxon>
        <taxon>Hyphomicrobiales</taxon>
        <taxon>Beijerinckiaceae</taxon>
        <taxon>Beijerinckia</taxon>
    </lineage>
</organism>
<name>GLPK_BEII9</name>
<feature type="chain" id="PRO_1000098716" description="Glycerol kinase">
    <location>
        <begin position="1"/>
        <end position="507"/>
    </location>
</feature>
<feature type="binding site" evidence="1">
    <location>
        <position position="12"/>
    </location>
    <ligand>
        <name>ADP</name>
        <dbReference type="ChEBI" id="CHEBI:456216"/>
    </ligand>
</feature>
<feature type="binding site" evidence="1">
    <location>
        <position position="12"/>
    </location>
    <ligand>
        <name>ATP</name>
        <dbReference type="ChEBI" id="CHEBI:30616"/>
    </ligand>
</feature>
<feature type="binding site" evidence="1">
    <location>
        <position position="12"/>
    </location>
    <ligand>
        <name>sn-glycerol 3-phosphate</name>
        <dbReference type="ChEBI" id="CHEBI:57597"/>
    </ligand>
</feature>
<feature type="binding site" evidence="1">
    <location>
        <position position="13"/>
    </location>
    <ligand>
        <name>ATP</name>
        <dbReference type="ChEBI" id="CHEBI:30616"/>
    </ligand>
</feature>
<feature type="binding site" evidence="1">
    <location>
        <position position="14"/>
    </location>
    <ligand>
        <name>ATP</name>
        <dbReference type="ChEBI" id="CHEBI:30616"/>
    </ligand>
</feature>
<feature type="binding site" evidence="1">
    <location>
        <position position="16"/>
    </location>
    <ligand>
        <name>ADP</name>
        <dbReference type="ChEBI" id="CHEBI:456216"/>
    </ligand>
</feature>
<feature type="binding site" evidence="1">
    <location>
        <position position="82"/>
    </location>
    <ligand>
        <name>glycerol</name>
        <dbReference type="ChEBI" id="CHEBI:17754"/>
    </ligand>
</feature>
<feature type="binding site" evidence="1">
    <location>
        <position position="82"/>
    </location>
    <ligand>
        <name>sn-glycerol 3-phosphate</name>
        <dbReference type="ChEBI" id="CHEBI:57597"/>
    </ligand>
</feature>
<feature type="binding site" evidence="1">
    <location>
        <position position="83"/>
    </location>
    <ligand>
        <name>glycerol</name>
        <dbReference type="ChEBI" id="CHEBI:17754"/>
    </ligand>
</feature>
<feature type="binding site" evidence="1">
    <location>
        <position position="83"/>
    </location>
    <ligand>
        <name>sn-glycerol 3-phosphate</name>
        <dbReference type="ChEBI" id="CHEBI:57597"/>
    </ligand>
</feature>
<feature type="binding site" evidence="1">
    <location>
        <position position="134"/>
    </location>
    <ligand>
        <name>glycerol</name>
        <dbReference type="ChEBI" id="CHEBI:17754"/>
    </ligand>
</feature>
<feature type="binding site" evidence="1">
    <location>
        <position position="134"/>
    </location>
    <ligand>
        <name>sn-glycerol 3-phosphate</name>
        <dbReference type="ChEBI" id="CHEBI:57597"/>
    </ligand>
</feature>
<feature type="binding site" evidence="1">
    <location>
        <position position="250"/>
    </location>
    <ligand>
        <name>glycerol</name>
        <dbReference type="ChEBI" id="CHEBI:17754"/>
    </ligand>
</feature>
<feature type="binding site" evidence="1">
    <location>
        <position position="250"/>
    </location>
    <ligand>
        <name>sn-glycerol 3-phosphate</name>
        <dbReference type="ChEBI" id="CHEBI:57597"/>
    </ligand>
</feature>
<feature type="binding site" evidence="1">
    <location>
        <position position="251"/>
    </location>
    <ligand>
        <name>glycerol</name>
        <dbReference type="ChEBI" id="CHEBI:17754"/>
    </ligand>
</feature>
<feature type="binding site" evidence="1">
    <location>
        <position position="272"/>
    </location>
    <ligand>
        <name>ADP</name>
        <dbReference type="ChEBI" id="CHEBI:456216"/>
    </ligand>
</feature>
<feature type="binding site" evidence="1">
    <location>
        <position position="272"/>
    </location>
    <ligand>
        <name>ATP</name>
        <dbReference type="ChEBI" id="CHEBI:30616"/>
    </ligand>
</feature>
<feature type="binding site" evidence="1">
    <location>
        <position position="316"/>
    </location>
    <ligand>
        <name>ADP</name>
        <dbReference type="ChEBI" id="CHEBI:456216"/>
    </ligand>
</feature>
<feature type="binding site" evidence="1">
    <location>
        <position position="316"/>
    </location>
    <ligand>
        <name>ATP</name>
        <dbReference type="ChEBI" id="CHEBI:30616"/>
    </ligand>
</feature>
<feature type="binding site" evidence="1">
    <location>
        <position position="320"/>
    </location>
    <ligand>
        <name>ATP</name>
        <dbReference type="ChEBI" id="CHEBI:30616"/>
    </ligand>
</feature>
<feature type="binding site" evidence="1">
    <location>
        <position position="417"/>
    </location>
    <ligand>
        <name>ADP</name>
        <dbReference type="ChEBI" id="CHEBI:456216"/>
    </ligand>
</feature>
<feature type="binding site" evidence="1">
    <location>
        <position position="417"/>
    </location>
    <ligand>
        <name>ATP</name>
        <dbReference type="ChEBI" id="CHEBI:30616"/>
    </ligand>
</feature>
<feature type="binding site" evidence="1">
    <location>
        <position position="421"/>
    </location>
    <ligand>
        <name>ADP</name>
        <dbReference type="ChEBI" id="CHEBI:456216"/>
    </ligand>
</feature>
<comment type="function">
    <text evidence="1">Key enzyme in the regulation of glycerol uptake and metabolism. Catalyzes the phosphorylation of glycerol to yield sn-glycerol 3-phosphate.</text>
</comment>
<comment type="catalytic activity">
    <reaction evidence="1">
        <text>glycerol + ATP = sn-glycerol 3-phosphate + ADP + H(+)</text>
        <dbReference type="Rhea" id="RHEA:21644"/>
        <dbReference type="ChEBI" id="CHEBI:15378"/>
        <dbReference type="ChEBI" id="CHEBI:17754"/>
        <dbReference type="ChEBI" id="CHEBI:30616"/>
        <dbReference type="ChEBI" id="CHEBI:57597"/>
        <dbReference type="ChEBI" id="CHEBI:456216"/>
        <dbReference type="EC" id="2.7.1.30"/>
    </reaction>
</comment>
<comment type="activity regulation">
    <text evidence="1">Inhibited by fructose 1,6-bisphosphate (FBP).</text>
</comment>
<comment type="pathway">
    <text evidence="1">Polyol metabolism; glycerol degradation via glycerol kinase pathway; sn-glycerol 3-phosphate from glycerol: step 1/1.</text>
</comment>
<comment type="similarity">
    <text evidence="1">Belongs to the FGGY kinase family.</text>
</comment>
<accession>B2IE09</accession>
<reference key="1">
    <citation type="journal article" date="2010" name="J. Bacteriol.">
        <title>Complete genome sequence of Beijerinckia indica subsp. indica.</title>
        <authorList>
            <person name="Tamas I."/>
            <person name="Dedysh S.N."/>
            <person name="Liesack W."/>
            <person name="Stott M.B."/>
            <person name="Alam M."/>
            <person name="Murrell J.C."/>
            <person name="Dunfield P.F."/>
        </authorList>
    </citation>
    <scope>NUCLEOTIDE SEQUENCE [LARGE SCALE GENOMIC DNA]</scope>
    <source>
        <strain>ATCC 9039 / DSM 1715 / NCIMB 8712</strain>
    </source>
</reference>
<proteinExistence type="inferred from homology"/>